<evidence type="ECO:0000250" key="1">
    <source>
        <dbReference type="UniProtKB" id="Q6P2K6"/>
    </source>
</evidence>
<evidence type="ECO:0000256" key="2">
    <source>
        <dbReference type="SAM" id="MobiDB-lite"/>
    </source>
</evidence>
<evidence type="ECO:0000269" key="3">
    <source>
    </source>
</evidence>
<evidence type="ECO:0000269" key="4">
    <source>
    </source>
</evidence>
<evidence type="ECO:0000269" key="5">
    <source>
    </source>
</evidence>
<evidence type="ECO:0000303" key="6">
    <source>
    </source>
</evidence>
<evidence type="ECO:0000303" key="7">
    <source>
    </source>
</evidence>
<evidence type="ECO:0000303" key="8">
    <source ref="1"/>
</evidence>
<evidence type="ECO:0000305" key="9"/>
<evidence type="ECO:0000312" key="10">
    <source>
        <dbReference type="HGNC" id="HGNC:20219"/>
    </source>
</evidence>
<evidence type="ECO:0007744" key="11">
    <source>
    </source>
</evidence>
<evidence type="ECO:0007744" key="12">
    <source>
    </source>
</evidence>
<evidence type="ECO:0007744" key="13">
    <source>
    </source>
</evidence>
<evidence type="ECO:0007744" key="14">
    <source>
    </source>
</evidence>
<evidence type="ECO:0007744" key="15">
    <source>
    </source>
</evidence>
<evidence type="ECO:0007744" key="16">
    <source>
    </source>
</evidence>
<evidence type="ECO:0007829" key="17">
    <source>
        <dbReference type="PDB" id="6R8I"/>
    </source>
</evidence>
<dbReference type="EMBL" id="AB095930">
    <property type="protein sequence ID" value="BAC23106.1"/>
    <property type="status" value="ALT_INIT"/>
    <property type="molecule type" value="mRNA"/>
</dbReference>
<dbReference type="EMBL" id="AK000714">
    <property type="protein sequence ID" value="BAA91338.1"/>
    <property type="molecule type" value="mRNA"/>
</dbReference>
<dbReference type="EMBL" id="AK001885">
    <property type="protein sequence ID" value="BAA91960.1"/>
    <property type="status" value="ALT_SEQ"/>
    <property type="molecule type" value="mRNA"/>
</dbReference>
<dbReference type="EMBL" id="AK024297">
    <property type="protein sequence ID" value="BAB14877.1"/>
    <property type="status" value="ALT_INIT"/>
    <property type="molecule type" value="mRNA"/>
</dbReference>
<dbReference type="EMBL" id="AL133153">
    <property type="status" value="NOT_ANNOTATED_CDS"/>
    <property type="molecule type" value="Genomic_DNA"/>
</dbReference>
<dbReference type="EMBL" id="BC038932">
    <property type="protein sequence ID" value="AAH38932.1"/>
    <property type="molecule type" value="mRNA"/>
</dbReference>
<dbReference type="EMBL" id="BC072409">
    <property type="protein sequence ID" value="AAH72409.1"/>
    <property type="molecule type" value="mRNA"/>
</dbReference>
<dbReference type="EMBL" id="BX248247">
    <property type="protein sequence ID" value="CAD62575.1"/>
    <property type="molecule type" value="mRNA"/>
</dbReference>
<dbReference type="EMBL" id="AL832921">
    <property type="protein sequence ID" value="CAH10634.1"/>
    <property type="molecule type" value="mRNA"/>
</dbReference>
<dbReference type="EMBL" id="AF113213">
    <property type="protein sequence ID" value="AAG39284.1"/>
    <property type="status" value="ALT_SEQ"/>
    <property type="molecule type" value="mRNA"/>
</dbReference>
<dbReference type="CCDS" id="CCDS61532.1">
    <molecule id="Q6IN85-4"/>
</dbReference>
<dbReference type="CCDS" id="CCDS91918.1">
    <molecule id="Q6IN85-1"/>
</dbReference>
<dbReference type="CCDS" id="CCDS9895.1">
    <molecule id="Q6IN85-2"/>
</dbReference>
<dbReference type="RefSeq" id="NP_001271209.1">
    <molecule id="Q6IN85-2"/>
    <property type="nucleotide sequence ID" value="NM_001284280.2"/>
</dbReference>
<dbReference type="RefSeq" id="NP_001271210.1">
    <molecule id="Q6IN85-4"/>
    <property type="nucleotide sequence ID" value="NM_001284281.2"/>
</dbReference>
<dbReference type="RefSeq" id="NP_001353361.1">
    <molecule id="Q6IN85-1"/>
    <property type="nucleotide sequence ID" value="NM_001366432.2"/>
</dbReference>
<dbReference type="RefSeq" id="XP_005267899.1">
    <molecule id="Q6IN85-1"/>
    <property type="nucleotide sequence ID" value="XM_005267842.3"/>
</dbReference>
<dbReference type="RefSeq" id="XP_047287517.1">
    <molecule id="Q6IN85-2"/>
    <property type="nucleotide sequence ID" value="XM_047431561.1"/>
</dbReference>
<dbReference type="RefSeq" id="XP_054232319.1">
    <molecule id="Q6IN85-1"/>
    <property type="nucleotide sequence ID" value="XM_054376344.1"/>
</dbReference>
<dbReference type="RefSeq" id="XP_054232320.1">
    <molecule id="Q6IN85-2"/>
    <property type="nucleotide sequence ID" value="XM_054376345.1"/>
</dbReference>
<dbReference type="PDB" id="6R8I">
    <property type="method" value="X-ray"/>
    <property type="resolution" value="1.52 A"/>
    <property type="chains" value="A=1-117"/>
</dbReference>
<dbReference type="PDBsum" id="6R8I"/>
<dbReference type="SMR" id="Q6IN85"/>
<dbReference type="BioGRID" id="120803">
    <property type="interactions" value="193"/>
</dbReference>
<dbReference type="ComplexPortal" id="CPX-1843">
    <property type="entry name" value="PPP4C-PPP4R2-PPP4R3A protein phosphatase 4 complex"/>
</dbReference>
<dbReference type="CORUM" id="Q6IN85"/>
<dbReference type="FunCoup" id="Q6IN85">
    <property type="interactions" value="4805"/>
</dbReference>
<dbReference type="IntAct" id="Q6IN85">
    <property type="interactions" value="91"/>
</dbReference>
<dbReference type="MINT" id="Q6IN85"/>
<dbReference type="STRING" id="9606.ENSP00000450864"/>
<dbReference type="GlyGen" id="Q6IN85">
    <property type="glycosylation" value="2 sites, 1 O-linked glycan (1 site)"/>
</dbReference>
<dbReference type="iPTMnet" id="Q6IN85"/>
<dbReference type="MetOSite" id="Q6IN85"/>
<dbReference type="PhosphoSitePlus" id="Q6IN85"/>
<dbReference type="SwissPalm" id="Q6IN85"/>
<dbReference type="BioMuta" id="PPP4R3A"/>
<dbReference type="DMDM" id="74736507"/>
<dbReference type="jPOST" id="Q6IN85"/>
<dbReference type="MassIVE" id="Q6IN85"/>
<dbReference type="PaxDb" id="9606-ENSP00000450864"/>
<dbReference type="PeptideAtlas" id="Q6IN85"/>
<dbReference type="ProteomicsDB" id="66444">
    <molecule id="Q6IN85-1"/>
</dbReference>
<dbReference type="ProteomicsDB" id="66445">
    <molecule id="Q6IN85-2"/>
</dbReference>
<dbReference type="ProteomicsDB" id="66446">
    <molecule id="Q6IN85-4"/>
</dbReference>
<dbReference type="ProteomicsDB" id="66447">
    <molecule id="Q6IN85-5"/>
</dbReference>
<dbReference type="Pumba" id="Q6IN85"/>
<dbReference type="Antibodypedia" id="119">
    <property type="antibodies" value="114 antibodies from 22 providers"/>
</dbReference>
<dbReference type="DNASU" id="55671"/>
<dbReference type="Ensembl" id="ENST00000554684.5">
    <molecule id="Q6IN85-2"/>
    <property type="protein sequence ID" value="ENSP00000450864.1"/>
    <property type="gene ID" value="ENSG00000100796.18"/>
</dbReference>
<dbReference type="Ensembl" id="ENST00000554943.6">
    <molecule id="Q6IN85-1"/>
    <property type="protein sequence ID" value="ENSP00000450883.1"/>
    <property type="gene ID" value="ENSG00000100796.18"/>
</dbReference>
<dbReference type="Ensembl" id="ENST00000555462.5">
    <molecule id="Q6IN85-4"/>
    <property type="protein sequence ID" value="ENSP00000450891.1"/>
    <property type="gene ID" value="ENSG00000100796.18"/>
</dbReference>
<dbReference type="GeneID" id="55671"/>
<dbReference type="KEGG" id="hsa:55671"/>
<dbReference type="MANE-Select" id="ENST00000554943.6">
    <property type="protein sequence ID" value="ENSP00000450883.1"/>
    <property type="RefSeq nucleotide sequence ID" value="NM_001366432.2"/>
    <property type="RefSeq protein sequence ID" value="NP_001353361.1"/>
</dbReference>
<dbReference type="UCSC" id="uc001xzn.5">
    <molecule id="Q6IN85-1"/>
    <property type="organism name" value="human"/>
</dbReference>
<dbReference type="AGR" id="HGNC:20219"/>
<dbReference type="CTD" id="55671"/>
<dbReference type="DisGeNET" id="55671"/>
<dbReference type="GeneCards" id="PPP4R3A"/>
<dbReference type="HGNC" id="HGNC:20219">
    <property type="gene designation" value="PPP4R3A"/>
</dbReference>
<dbReference type="HPA" id="ENSG00000100796">
    <property type="expression patterns" value="Low tissue specificity"/>
</dbReference>
<dbReference type="MIM" id="610351">
    <property type="type" value="gene"/>
</dbReference>
<dbReference type="neXtProt" id="NX_Q6IN85"/>
<dbReference type="OpenTargets" id="ENSG00000100796"/>
<dbReference type="PharmGKB" id="PA162403940"/>
<dbReference type="VEuPathDB" id="HostDB:ENSG00000100796"/>
<dbReference type="eggNOG" id="KOG2175">
    <property type="taxonomic scope" value="Eukaryota"/>
</dbReference>
<dbReference type="GeneTree" id="ENSGT00390000018199"/>
<dbReference type="InParanoid" id="Q6IN85"/>
<dbReference type="OMA" id="ALMTHNN"/>
<dbReference type="OrthoDB" id="27483at2759"/>
<dbReference type="PAN-GO" id="Q6IN85">
    <property type="GO annotations" value="5 GO annotations based on evolutionary models"/>
</dbReference>
<dbReference type="PhylomeDB" id="Q6IN85"/>
<dbReference type="TreeFam" id="TF315190"/>
<dbReference type="PathwayCommons" id="Q6IN85"/>
<dbReference type="SignaLink" id="Q6IN85"/>
<dbReference type="SIGNOR" id="Q6IN85"/>
<dbReference type="BioGRID-ORCS" id="55671">
    <property type="hits" value="76 hits in 1152 CRISPR screens"/>
</dbReference>
<dbReference type="ChiTaRS" id="PPP4R3A">
    <property type="organism name" value="human"/>
</dbReference>
<dbReference type="GenomeRNAi" id="55671"/>
<dbReference type="Pharos" id="Q6IN85">
    <property type="development level" value="Tbio"/>
</dbReference>
<dbReference type="PRO" id="PR:Q6IN85"/>
<dbReference type="Proteomes" id="UP000005640">
    <property type="component" value="Chromosome 14"/>
</dbReference>
<dbReference type="RNAct" id="Q6IN85">
    <property type="molecule type" value="protein"/>
</dbReference>
<dbReference type="Bgee" id="ENSG00000100796">
    <property type="expression patterns" value="Expressed in ventricular zone and 196 other cell types or tissues"/>
</dbReference>
<dbReference type="ExpressionAtlas" id="Q6IN85">
    <property type="expression patterns" value="baseline and differential"/>
</dbReference>
<dbReference type="GO" id="GO:0005813">
    <property type="term" value="C:centrosome"/>
    <property type="evidence" value="ECO:0007669"/>
    <property type="project" value="UniProtKB-SubCell"/>
</dbReference>
<dbReference type="GO" id="GO:0005829">
    <property type="term" value="C:cytosol"/>
    <property type="evidence" value="ECO:0000314"/>
    <property type="project" value="HPA"/>
</dbReference>
<dbReference type="GO" id="GO:0016607">
    <property type="term" value="C:nuclear speck"/>
    <property type="evidence" value="ECO:0000314"/>
    <property type="project" value="HPA"/>
</dbReference>
<dbReference type="GO" id="GO:0005654">
    <property type="term" value="C:nucleoplasm"/>
    <property type="evidence" value="ECO:0000314"/>
    <property type="project" value="HPA"/>
</dbReference>
<dbReference type="GO" id="GO:0030289">
    <property type="term" value="C:protein phosphatase 4 complex"/>
    <property type="evidence" value="ECO:0000318"/>
    <property type="project" value="GO_Central"/>
</dbReference>
<dbReference type="GO" id="GO:0072542">
    <property type="term" value="F:protein phosphatase activator activity"/>
    <property type="evidence" value="ECO:0000318"/>
    <property type="project" value="GO_Central"/>
</dbReference>
<dbReference type="GO" id="GO:0006974">
    <property type="term" value="P:DNA damage response"/>
    <property type="evidence" value="ECO:0000318"/>
    <property type="project" value="GO_Central"/>
</dbReference>
<dbReference type="GO" id="GO:0006094">
    <property type="term" value="P:gluconeogenesis"/>
    <property type="evidence" value="ECO:0007669"/>
    <property type="project" value="Ensembl"/>
</dbReference>
<dbReference type="GO" id="GO:0045722">
    <property type="term" value="P:positive regulation of gluconeogenesis"/>
    <property type="evidence" value="ECO:0007669"/>
    <property type="project" value="Ensembl"/>
</dbReference>
<dbReference type="GO" id="GO:2000779">
    <property type="term" value="P:regulation of double-strand break repair"/>
    <property type="evidence" value="ECO:0000318"/>
    <property type="project" value="GO_Central"/>
</dbReference>
<dbReference type="FunFam" id="2.30.29.30:FF:000051">
    <property type="entry name" value="Serine/threonine-protein phosphatase 4 regulatory subunit 3B"/>
    <property type="match status" value="1"/>
</dbReference>
<dbReference type="Gene3D" id="2.30.29.30">
    <property type="entry name" value="Pleckstrin-homology domain (PH domain)/Phosphotyrosine-binding domain (PTB)"/>
    <property type="match status" value="1"/>
</dbReference>
<dbReference type="InterPro" id="IPR016024">
    <property type="entry name" value="ARM-type_fold"/>
</dbReference>
<dbReference type="InterPro" id="IPR055236">
    <property type="entry name" value="EVH1_PP4R3"/>
</dbReference>
<dbReference type="InterPro" id="IPR006887">
    <property type="entry name" value="P4R3-like_central_dom"/>
</dbReference>
<dbReference type="InterPro" id="IPR011993">
    <property type="entry name" value="PH-like_dom_sf"/>
</dbReference>
<dbReference type="InterPro" id="IPR051137">
    <property type="entry name" value="PP4R3-like"/>
</dbReference>
<dbReference type="PANTHER" id="PTHR23318">
    <property type="entry name" value="ATP SYNTHASE GAMMA-RELATED"/>
    <property type="match status" value="1"/>
</dbReference>
<dbReference type="PANTHER" id="PTHR23318:SF3">
    <property type="entry name" value="SERINE_THREONINE-PROTEIN PHOSPHATASE 4 REGULATORY SUBUNIT 3A"/>
    <property type="match status" value="1"/>
</dbReference>
<dbReference type="Pfam" id="PF22972">
    <property type="entry name" value="EVH1_PP4R3"/>
    <property type="match status" value="1"/>
</dbReference>
<dbReference type="Pfam" id="PF04802">
    <property type="entry name" value="PP4R3"/>
    <property type="match status" value="1"/>
</dbReference>
<dbReference type="SUPFAM" id="SSF48371">
    <property type="entry name" value="ARM repeat"/>
    <property type="match status" value="1"/>
</dbReference>
<dbReference type="SUPFAM" id="SSF50729">
    <property type="entry name" value="PH domain-like"/>
    <property type="match status" value="1"/>
</dbReference>
<reference key="1">
    <citation type="submission" date="2002-11" db="EMBL/GenBank/DDBJ databases">
        <title>The nucleotide sequence of a long cDNA clone isolated from human.</title>
        <authorList>
            <person name="Nagase T."/>
            <person name="Kikuno R."/>
            <person name="Ohara O."/>
        </authorList>
    </citation>
    <scope>NUCLEOTIDE SEQUENCE [LARGE SCALE MRNA] (ISOFORM 2)</scope>
    <source>
        <tissue>Brain</tissue>
    </source>
</reference>
<reference key="2">
    <citation type="journal article" date="2004" name="Nat. Genet.">
        <title>Complete sequencing and characterization of 21,243 full-length human cDNAs.</title>
        <authorList>
            <person name="Ota T."/>
            <person name="Suzuki Y."/>
            <person name="Nishikawa T."/>
            <person name="Otsuki T."/>
            <person name="Sugiyama T."/>
            <person name="Irie R."/>
            <person name="Wakamatsu A."/>
            <person name="Hayashi K."/>
            <person name="Sato H."/>
            <person name="Nagai K."/>
            <person name="Kimura K."/>
            <person name="Makita H."/>
            <person name="Sekine M."/>
            <person name="Obayashi M."/>
            <person name="Nishi T."/>
            <person name="Shibahara T."/>
            <person name="Tanaka T."/>
            <person name="Ishii S."/>
            <person name="Yamamoto J."/>
            <person name="Saito K."/>
            <person name="Kawai Y."/>
            <person name="Isono Y."/>
            <person name="Nakamura Y."/>
            <person name="Nagahari K."/>
            <person name="Murakami K."/>
            <person name="Yasuda T."/>
            <person name="Iwayanagi T."/>
            <person name="Wagatsuma M."/>
            <person name="Shiratori A."/>
            <person name="Sudo H."/>
            <person name="Hosoiri T."/>
            <person name="Kaku Y."/>
            <person name="Kodaira H."/>
            <person name="Kondo H."/>
            <person name="Sugawara M."/>
            <person name="Takahashi M."/>
            <person name="Kanda K."/>
            <person name="Yokoi T."/>
            <person name="Furuya T."/>
            <person name="Kikkawa E."/>
            <person name="Omura Y."/>
            <person name="Abe K."/>
            <person name="Kamihara K."/>
            <person name="Katsuta N."/>
            <person name="Sato K."/>
            <person name="Tanikawa M."/>
            <person name="Yamazaki M."/>
            <person name="Ninomiya K."/>
            <person name="Ishibashi T."/>
            <person name="Yamashita H."/>
            <person name="Murakawa K."/>
            <person name="Fujimori K."/>
            <person name="Tanai H."/>
            <person name="Kimata M."/>
            <person name="Watanabe M."/>
            <person name="Hiraoka S."/>
            <person name="Chiba Y."/>
            <person name="Ishida S."/>
            <person name="Ono Y."/>
            <person name="Takiguchi S."/>
            <person name="Watanabe S."/>
            <person name="Yosida M."/>
            <person name="Hotuta T."/>
            <person name="Kusano J."/>
            <person name="Kanehori K."/>
            <person name="Takahashi-Fujii A."/>
            <person name="Hara H."/>
            <person name="Tanase T.-O."/>
            <person name="Nomura Y."/>
            <person name="Togiya S."/>
            <person name="Komai F."/>
            <person name="Hara R."/>
            <person name="Takeuchi K."/>
            <person name="Arita M."/>
            <person name="Imose N."/>
            <person name="Musashino K."/>
            <person name="Yuuki H."/>
            <person name="Oshima A."/>
            <person name="Sasaki N."/>
            <person name="Aotsuka S."/>
            <person name="Yoshikawa Y."/>
            <person name="Matsunawa H."/>
            <person name="Ichihara T."/>
            <person name="Shiohata N."/>
            <person name="Sano S."/>
            <person name="Moriya S."/>
            <person name="Momiyama H."/>
            <person name="Satoh N."/>
            <person name="Takami S."/>
            <person name="Terashima Y."/>
            <person name="Suzuki O."/>
            <person name="Nakagawa S."/>
            <person name="Senoh A."/>
            <person name="Mizoguchi H."/>
            <person name="Goto Y."/>
            <person name="Shimizu F."/>
            <person name="Wakebe H."/>
            <person name="Hishigaki H."/>
            <person name="Watanabe T."/>
            <person name="Sugiyama A."/>
            <person name="Takemoto M."/>
            <person name="Kawakami B."/>
            <person name="Yamazaki M."/>
            <person name="Watanabe K."/>
            <person name="Kumagai A."/>
            <person name="Itakura S."/>
            <person name="Fukuzumi Y."/>
            <person name="Fujimori Y."/>
            <person name="Komiyama M."/>
            <person name="Tashiro H."/>
            <person name="Tanigami A."/>
            <person name="Fujiwara T."/>
            <person name="Ono T."/>
            <person name="Yamada K."/>
            <person name="Fujii Y."/>
            <person name="Ozaki K."/>
            <person name="Hirao M."/>
            <person name="Ohmori Y."/>
            <person name="Kawabata A."/>
            <person name="Hikiji T."/>
            <person name="Kobatake N."/>
            <person name="Inagaki H."/>
            <person name="Ikema Y."/>
            <person name="Okamoto S."/>
            <person name="Okitani R."/>
            <person name="Kawakami T."/>
            <person name="Noguchi S."/>
            <person name="Itoh T."/>
            <person name="Shigeta K."/>
            <person name="Senba T."/>
            <person name="Matsumura K."/>
            <person name="Nakajima Y."/>
            <person name="Mizuno T."/>
            <person name="Morinaga M."/>
            <person name="Sasaki M."/>
            <person name="Togashi T."/>
            <person name="Oyama M."/>
            <person name="Hata H."/>
            <person name="Watanabe M."/>
            <person name="Komatsu T."/>
            <person name="Mizushima-Sugano J."/>
            <person name="Satoh T."/>
            <person name="Shirai Y."/>
            <person name="Takahashi Y."/>
            <person name="Nakagawa K."/>
            <person name="Okumura K."/>
            <person name="Nagase T."/>
            <person name="Nomura N."/>
            <person name="Kikuchi H."/>
            <person name="Masuho Y."/>
            <person name="Yamashita R."/>
            <person name="Nakai K."/>
            <person name="Yada T."/>
            <person name="Nakamura Y."/>
            <person name="Ohara O."/>
            <person name="Isogai T."/>
            <person name="Sugano S."/>
        </authorList>
    </citation>
    <scope>NUCLEOTIDE SEQUENCE [LARGE SCALE MRNA] (ISOFORM 5)</scope>
    <scope>NUCLEOTIDE SEQUENCE [LARGE SCALE MRNA] OF 98-833 (ISOFORM 2)</scope>
    <scope>NUCLEOTIDE SEQUENCE [LARGE SCALE MRNA] OF 165-422 (ISOFORM 1)</scope>
    <source>
        <tissue>Ileal mucosa</tissue>
        <tissue>Placenta</tissue>
    </source>
</reference>
<reference key="3">
    <citation type="journal article" date="2003" name="Nature">
        <title>The DNA sequence and analysis of human chromosome 14.</title>
        <authorList>
            <person name="Heilig R."/>
            <person name="Eckenberg R."/>
            <person name="Petit J.-L."/>
            <person name="Fonknechten N."/>
            <person name="Da Silva C."/>
            <person name="Cattolico L."/>
            <person name="Levy M."/>
            <person name="Barbe V."/>
            <person name="De Berardinis V."/>
            <person name="Ureta-Vidal A."/>
            <person name="Pelletier E."/>
            <person name="Vico V."/>
            <person name="Anthouard V."/>
            <person name="Rowen L."/>
            <person name="Madan A."/>
            <person name="Qin S."/>
            <person name="Sun H."/>
            <person name="Du H."/>
            <person name="Pepin K."/>
            <person name="Artiguenave F."/>
            <person name="Robert C."/>
            <person name="Cruaud C."/>
            <person name="Bruels T."/>
            <person name="Jaillon O."/>
            <person name="Friedlander L."/>
            <person name="Samson G."/>
            <person name="Brottier P."/>
            <person name="Cure S."/>
            <person name="Segurens B."/>
            <person name="Aniere F."/>
            <person name="Samain S."/>
            <person name="Crespeau H."/>
            <person name="Abbasi N."/>
            <person name="Aiach N."/>
            <person name="Boscus D."/>
            <person name="Dickhoff R."/>
            <person name="Dors M."/>
            <person name="Dubois I."/>
            <person name="Friedman C."/>
            <person name="Gouyvenoux M."/>
            <person name="James R."/>
            <person name="Madan A."/>
            <person name="Mairey-Estrada B."/>
            <person name="Mangenot S."/>
            <person name="Martins N."/>
            <person name="Menard M."/>
            <person name="Oztas S."/>
            <person name="Ratcliffe A."/>
            <person name="Shaffer T."/>
            <person name="Trask B."/>
            <person name="Vacherie B."/>
            <person name="Bellemere C."/>
            <person name="Belser C."/>
            <person name="Besnard-Gonnet M."/>
            <person name="Bartol-Mavel D."/>
            <person name="Boutard M."/>
            <person name="Briez-Silla S."/>
            <person name="Combette S."/>
            <person name="Dufosse-Laurent V."/>
            <person name="Ferron C."/>
            <person name="Lechaplais C."/>
            <person name="Louesse C."/>
            <person name="Muselet D."/>
            <person name="Magdelenat G."/>
            <person name="Pateau E."/>
            <person name="Petit E."/>
            <person name="Sirvain-Trukniewicz P."/>
            <person name="Trybou A."/>
            <person name="Vega-Czarny N."/>
            <person name="Bataille E."/>
            <person name="Bluet E."/>
            <person name="Bordelais I."/>
            <person name="Dubois M."/>
            <person name="Dumont C."/>
            <person name="Guerin T."/>
            <person name="Haffray S."/>
            <person name="Hammadi R."/>
            <person name="Muanga J."/>
            <person name="Pellouin V."/>
            <person name="Robert D."/>
            <person name="Wunderle E."/>
            <person name="Gauguet G."/>
            <person name="Roy A."/>
            <person name="Sainte-Marthe L."/>
            <person name="Verdier J."/>
            <person name="Verdier-Discala C."/>
            <person name="Hillier L.W."/>
            <person name="Fulton L."/>
            <person name="McPherson J."/>
            <person name="Matsuda F."/>
            <person name="Wilson R."/>
            <person name="Scarpelli C."/>
            <person name="Gyapay G."/>
            <person name="Wincker P."/>
            <person name="Saurin W."/>
            <person name="Quetier F."/>
            <person name="Waterston R."/>
            <person name="Hood L."/>
            <person name="Weissenbach J."/>
        </authorList>
    </citation>
    <scope>NUCLEOTIDE SEQUENCE [LARGE SCALE GENOMIC DNA]</scope>
</reference>
<reference key="4">
    <citation type="journal article" date="2004" name="Genome Res.">
        <title>The status, quality, and expansion of the NIH full-length cDNA project: the Mammalian Gene Collection (MGC).</title>
        <authorList>
            <consortium name="The MGC Project Team"/>
        </authorList>
    </citation>
    <scope>NUCLEOTIDE SEQUENCE [LARGE SCALE MRNA] (ISOFORMS 1 AND 4)</scope>
    <source>
        <tissue>Eye</tissue>
    </source>
</reference>
<reference key="5">
    <citation type="submission" date="2003-02" db="EMBL/GenBank/DDBJ databases">
        <title>Full-length cDNA libraries and normalization.</title>
        <authorList>
            <person name="Li W.B."/>
            <person name="Gruber C."/>
            <person name="Jessee J."/>
            <person name="Polayes D."/>
        </authorList>
    </citation>
    <scope>NUCLEOTIDE SEQUENCE [LARGE SCALE MRNA] OF 238-833</scope>
    <source>
        <tissue>Neuroblastoma</tissue>
    </source>
</reference>
<reference key="6">
    <citation type="journal article" date="2007" name="BMC Genomics">
        <title>The full-ORF clone resource of the German cDNA consortium.</title>
        <authorList>
            <person name="Bechtel S."/>
            <person name="Rosenfelder H."/>
            <person name="Duda A."/>
            <person name="Schmidt C.P."/>
            <person name="Ernst U."/>
            <person name="Wellenreuther R."/>
            <person name="Mehrle A."/>
            <person name="Schuster C."/>
            <person name="Bahr A."/>
            <person name="Bloecker H."/>
            <person name="Heubner D."/>
            <person name="Hoerlein A."/>
            <person name="Michel G."/>
            <person name="Wedler H."/>
            <person name="Koehrer K."/>
            <person name="Ottenwaelder B."/>
            <person name="Poustka A."/>
            <person name="Wiemann S."/>
            <person name="Schupp I."/>
        </authorList>
    </citation>
    <scope>NUCLEOTIDE SEQUENCE [LARGE SCALE MRNA] OF 667-833</scope>
    <source>
        <tissue>Melanoma</tissue>
    </source>
</reference>
<reference key="7">
    <citation type="submission" date="1998-12" db="EMBL/GenBank/DDBJ databases">
        <authorList>
            <person name="Liu B."/>
            <person name="Liu Y.Q."/>
            <person name="Wang X.Y."/>
            <person name="Zhao B."/>
            <person name="Sheng H."/>
            <person name="Zhao X.W."/>
            <person name="Liu S."/>
            <person name="Xu Y.Y."/>
            <person name="Ye J."/>
            <person name="Song L."/>
            <person name="Gao Y."/>
            <person name="Zhang C.L."/>
            <person name="Zhang J."/>
            <person name="Wei Y.J."/>
            <person name="Cao H.Q."/>
            <person name="Zhao Y."/>
            <person name="Liu L.S."/>
            <person name="Ding J.F."/>
            <person name="Gao R.L."/>
            <person name="Wu Q.Y."/>
            <person name="Qiang B.Q."/>
            <person name="Yuan J.G."/>
            <person name="Liew C.C."/>
            <person name="Zhao M.S."/>
            <person name="Hui R.T."/>
        </authorList>
    </citation>
    <scope>NUCLEOTIDE SEQUENCE [LARGE SCALE MRNA] OF 808-833</scope>
    <source>
        <tissue>Aorta</tissue>
    </source>
</reference>
<reference key="8">
    <citation type="journal article" date="2005" name="Mol. Cell. Proteomics">
        <title>A novel, evolutionarily conserved protein phosphatase complex involved in cisplatin sensitivity.</title>
        <authorList>
            <person name="Gingras A.-C."/>
            <person name="Caballero M."/>
            <person name="Zarske M."/>
            <person name="Sanchez A."/>
            <person name="Hazbun T.R."/>
            <person name="Fields S."/>
            <person name="Sonenberg N."/>
            <person name="Hafen E."/>
            <person name="Raught B."/>
            <person name="Aebersold R."/>
        </authorList>
    </citation>
    <scope>IDENTIFICATION IN THE PPP4C-PPP4R2-PPP4R3A COMPLEX</scope>
    <scope>INTERACTION WITH PPP4C</scope>
    <scope>IDENTIFICATION BY MASS SPECTROMETRY</scope>
</reference>
<reference key="9">
    <citation type="journal article" date="2008" name="Int. J. Biochem. Cell Biol.">
        <title>Depletion of protein phosphatase 4 in human cells reveals essential roles in centrosome maturation, cell migration and the regulation of Rho GTPases.</title>
        <authorList>
            <person name="Martin-Granados C."/>
            <person name="Philp A."/>
            <person name="Oxenham S.K."/>
            <person name="Prescott A.R."/>
            <person name="Cohen P.T.W."/>
        </authorList>
    </citation>
    <scope>SUBCELLULAR LOCATION</scope>
</reference>
<reference key="10">
    <citation type="journal article" date="2008" name="Mol. Cell">
        <title>A PP4-phosphatase complex dephosphorylates gamma-H2AX generated during DNA replication.</title>
        <authorList>
            <person name="Chowdhury D."/>
            <person name="Xu X."/>
            <person name="Zhong X."/>
            <person name="Ahmed F."/>
            <person name="Zhong J."/>
            <person name="Liao J."/>
            <person name="Dykxhoorn D.M."/>
            <person name="Weinstock D.M."/>
            <person name="Pfeifer G.P."/>
            <person name="Lieberman J."/>
        </authorList>
    </citation>
    <scope>IDENTIFICATION IN THE PPP4C-PPP4R2-PPP4R3A COMPLEX</scope>
    <scope>FUNCTION OF THE PPP4C-PPP4R2-PPP4R3A COMPLEX</scope>
</reference>
<reference key="11">
    <citation type="journal article" date="2008" name="Proc. Natl. Acad. Sci. U.S.A.">
        <title>A quantitative atlas of mitotic phosphorylation.</title>
        <authorList>
            <person name="Dephoure N."/>
            <person name="Zhou C."/>
            <person name="Villen J."/>
            <person name="Beausoleil S.A."/>
            <person name="Bakalarski C.E."/>
            <person name="Elledge S.J."/>
            <person name="Gygi S.P."/>
        </authorList>
    </citation>
    <scope>PHOSPHORYLATION [LARGE SCALE ANALYSIS] AT SER-117 AND SER-771</scope>
    <scope>IDENTIFICATION BY MASS SPECTROMETRY [LARGE SCALE ANALYSIS]</scope>
    <source>
        <tissue>Cervix carcinoma</tissue>
    </source>
</reference>
<reference key="12">
    <citation type="journal article" date="2009" name="Anal. Chem.">
        <title>Lys-N and trypsin cover complementary parts of the phosphoproteome in a refined SCX-based approach.</title>
        <authorList>
            <person name="Gauci S."/>
            <person name="Helbig A.O."/>
            <person name="Slijper M."/>
            <person name="Krijgsveld J."/>
            <person name="Heck A.J."/>
            <person name="Mohammed S."/>
        </authorList>
    </citation>
    <scope>IDENTIFICATION BY MASS SPECTROMETRY [LARGE SCALE ANALYSIS]</scope>
</reference>
<reference key="13">
    <citation type="journal article" date="2009" name="Sci. Signal.">
        <title>Quantitative phosphoproteomic analysis of T cell receptor signaling reveals system-wide modulation of protein-protein interactions.</title>
        <authorList>
            <person name="Mayya V."/>
            <person name="Lundgren D.H."/>
            <person name="Hwang S.-I."/>
            <person name="Rezaul K."/>
            <person name="Wu L."/>
            <person name="Eng J.K."/>
            <person name="Rodionov V."/>
            <person name="Han D.K."/>
        </authorList>
    </citation>
    <scope>PHOSPHORYLATION [LARGE SCALE ANALYSIS] AT SER-771; SER-774 AND SER-777</scope>
    <scope>IDENTIFICATION BY MASS SPECTROMETRY [LARGE SCALE ANALYSIS]</scope>
    <source>
        <tissue>Leukemic T-cell</tissue>
    </source>
</reference>
<reference key="14">
    <citation type="journal article" date="2009" name="Science">
        <title>Lysine acetylation targets protein complexes and co-regulates major cellular functions.</title>
        <authorList>
            <person name="Choudhary C."/>
            <person name="Kumar C."/>
            <person name="Gnad F."/>
            <person name="Nielsen M.L."/>
            <person name="Rehman M."/>
            <person name="Walther T.C."/>
            <person name="Olsen J.V."/>
            <person name="Mann M."/>
        </authorList>
    </citation>
    <scope>ACETYLATION [LARGE SCALE ANALYSIS] AT LYS-655</scope>
    <scope>IDENTIFICATION BY MASS SPECTROMETRY [LARGE SCALE ANALYSIS]</scope>
</reference>
<reference key="15">
    <citation type="journal article" date="2011" name="BMC Syst. Biol.">
        <title>Initial characterization of the human central proteome.</title>
        <authorList>
            <person name="Burkard T.R."/>
            <person name="Planyavsky M."/>
            <person name="Kaupe I."/>
            <person name="Breitwieser F.P."/>
            <person name="Buerckstuemmer T."/>
            <person name="Bennett K.L."/>
            <person name="Superti-Furga G."/>
            <person name="Colinge J."/>
        </authorList>
    </citation>
    <scope>IDENTIFICATION BY MASS SPECTROMETRY [LARGE SCALE ANALYSIS]</scope>
</reference>
<reference key="16">
    <citation type="journal article" date="2011" name="Sci. Signal.">
        <title>System-wide temporal characterization of the proteome and phosphoproteome of human embryonic stem cell differentiation.</title>
        <authorList>
            <person name="Rigbolt K.T."/>
            <person name="Prokhorova T.A."/>
            <person name="Akimov V."/>
            <person name="Henningsen J."/>
            <person name="Johansen P.T."/>
            <person name="Kratchmarova I."/>
            <person name="Kassem M."/>
            <person name="Mann M."/>
            <person name="Olsen J.V."/>
            <person name="Blagoev B."/>
        </authorList>
    </citation>
    <scope>PHOSPHORYLATION [LARGE SCALE ANALYSIS] AT SER-741</scope>
    <scope>IDENTIFICATION BY MASS SPECTROMETRY [LARGE SCALE ANALYSIS]</scope>
</reference>
<reference key="17">
    <citation type="journal article" date="2013" name="J. Proteome Res.">
        <title>Toward a comprehensive characterization of a human cancer cell phosphoproteome.</title>
        <authorList>
            <person name="Zhou H."/>
            <person name="Di Palma S."/>
            <person name="Preisinger C."/>
            <person name="Peng M."/>
            <person name="Polat A.N."/>
            <person name="Heck A.J."/>
            <person name="Mohammed S."/>
        </authorList>
    </citation>
    <scope>PHOSPHORYLATION [LARGE SCALE ANALYSIS] AT SER-741</scope>
    <scope>IDENTIFICATION BY MASS SPECTROMETRY [LARGE SCALE ANALYSIS]</scope>
    <source>
        <tissue>Cervix carcinoma</tissue>
        <tissue>Erythroleukemia</tissue>
    </source>
</reference>
<reference key="18">
    <citation type="journal article" date="2014" name="J. Proteomics">
        <title>An enzyme assisted RP-RPLC approach for in-depth analysis of human liver phosphoproteome.</title>
        <authorList>
            <person name="Bian Y."/>
            <person name="Song C."/>
            <person name="Cheng K."/>
            <person name="Dong M."/>
            <person name="Wang F."/>
            <person name="Huang J."/>
            <person name="Sun D."/>
            <person name="Wang L."/>
            <person name="Ye M."/>
            <person name="Zou H."/>
        </authorList>
    </citation>
    <scope>PHOSPHORYLATION [LARGE SCALE ANALYSIS] AT SER-117; SER-127 AND SER-698</scope>
    <scope>IDENTIFICATION BY MASS SPECTROMETRY [LARGE SCALE ANALYSIS]</scope>
    <source>
        <tissue>Liver</tissue>
    </source>
</reference>
<feature type="chain" id="PRO_0000254598" description="Serine/threonine-protein phosphatase 4 regulatory subunit 3A">
    <location>
        <begin position="1"/>
        <end position="833"/>
    </location>
</feature>
<feature type="domain" description="WH1">
    <location>
        <begin position="1"/>
        <end position="100"/>
    </location>
</feature>
<feature type="region of interest" description="Disordered" evidence="2">
    <location>
        <begin position="683"/>
        <end position="712"/>
    </location>
</feature>
<feature type="region of interest" description="Disordered" evidence="2">
    <location>
        <begin position="733"/>
        <end position="833"/>
    </location>
</feature>
<feature type="compositionally biased region" description="Acidic residues" evidence="2">
    <location>
        <begin position="683"/>
        <end position="694"/>
    </location>
</feature>
<feature type="compositionally biased region" description="Polar residues" evidence="2">
    <location>
        <begin position="734"/>
        <end position="751"/>
    </location>
</feature>
<feature type="compositionally biased region" description="Low complexity" evidence="2">
    <location>
        <begin position="752"/>
        <end position="768"/>
    </location>
</feature>
<feature type="compositionally biased region" description="Polar residues" evidence="2">
    <location>
        <begin position="785"/>
        <end position="794"/>
    </location>
</feature>
<feature type="compositionally biased region" description="Acidic residues" evidence="2">
    <location>
        <begin position="806"/>
        <end position="820"/>
    </location>
</feature>
<feature type="modified residue" description="Phosphoserine" evidence="11 16">
    <location>
        <position position="117"/>
    </location>
</feature>
<feature type="modified residue" description="Phosphoserine" evidence="16">
    <location>
        <position position="127"/>
    </location>
</feature>
<feature type="modified residue" description="N6-acetyllysine" evidence="12">
    <location>
        <position position="655"/>
    </location>
</feature>
<feature type="modified residue" description="Phosphoserine" evidence="16">
    <location>
        <position position="698"/>
    </location>
</feature>
<feature type="modified residue" description="Phosphoserine" evidence="14 15">
    <location>
        <position position="741"/>
    </location>
</feature>
<feature type="modified residue" description="Phosphoserine" evidence="1">
    <location>
        <position position="768"/>
    </location>
</feature>
<feature type="modified residue" description="Phosphoserine" evidence="11 13">
    <location>
        <position position="771"/>
    </location>
</feature>
<feature type="modified residue" description="Phosphoserine" evidence="13">
    <location>
        <position position="774"/>
    </location>
</feature>
<feature type="modified residue" description="Phosphoserine" evidence="13">
    <location>
        <position position="777"/>
    </location>
</feature>
<feature type="modified residue" description="Phosphoserine" evidence="1">
    <location>
        <position position="780"/>
    </location>
</feature>
<feature type="splice variant" id="VSP_021252" description="In isoform 4." evidence="7">
    <location>
        <begin position="67"/>
        <end position="305"/>
    </location>
</feature>
<feature type="splice variant" id="VSP_021253" description="In isoform 2 and isoform 5." evidence="6 8">
    <location>
        <begin position="410"/>
        <end position="422"/>
    </location>
</feature>
<feature type="splice variant" id="VSP_021256" description="In isoform 5." evidence="6">
    <location>
        <begin position="554"/>
        <end position="833"/>
    </location>
</feature>
<feature type="strand" evidence="17">
    <location>
        <begin position="7"/>
        <end position="13"/>
    </location>
</feature>
<feature type="strand" evidence="17">
    <location>
        <begin position="17"/>
        <end position="32"/>
    </location>
</feature>
<feature type="turn" evidence="17">
    <location>
        <begin position="33"/>
        <end position="36"/>
    </location>
</feature>
<feature type="strand" evidence="17">
    <location>
        <begin position="37"/>
        <end position="44"/>
    </location>
</feature>
<feature type="turn" evidence="17">
    <location>
        <begin position="45"/>
        <end position="47"/>
    </location>
</feature>
<feature type="strand" evidence="17">
    <location>
        <begin position="50"/>
        <end position="55"/>
    </location>
</feature>
<feature type="strand" evidence="17">
    <location>
        <begin position="63"/>
        <end position="66"/>
    </location>
</feature>
<feature type="strand" evidence="17">
    <location>
        <begin position="69"/>
        <end position="75"/>
    </location>
</feature>
<feature type="strand" evidence="17">
    <location>
        <begin position="78"/>
        <end position="85"/>
    </location>
</feature>
<feature type="helix" evidence="17">
    <location>
        <begin position="87"/>
        <end position="101"/>
    </location>
</feature>
<feature type="strand" evidence="17">
    <location>
        <begin position="108"/>
        <end position="110"/>
    </location>
</feature>
<organism>
    <name type="scientific">Homo sapiens</name>
    <name type="common">Human</name>
    <dbReference type="NCBI Taxonomy" id="9606"/>
    <lineage>
        <taxon>Eukaryota</taxon>
        <taxon>Metazoa</taxon>
        <taxon>Chordata</taxon>
        <taxon>Craniata</taxon>
        <taxon>Vertebrata</taxon>
        <taxon>Euteleostomi</taxon>
        <taxon>Mammalia</taxon>
        <taxon>Eutheria</taxon>
        <taxon>Euarchontoglires</taxon>
        <taxon>Primates</taxon>
        <taxon>Haplorrhini</taxon>
        <taxon>Catarrhini</taxon>
        <taxon>Hominidae</taxon>
        <taxon>Homo</taxon>
    </lineage>
</organism>
<protein>
    <recommendedName>
        <fullName evidence="10">Serine/threonine-protein phosphatase 4 regulatory subunit 3A</fullName>
    </recommendedName>
    <alternativeName>
        <fullName>SMEK homolog 1</fullName>
    </alternativeName>
</protein>
<keyword id="KW-0002">3D-structure</keyword>
<keyword id="KW-0007">Acetylation</keyword>
<keyword id="KW-0025">Alternative splicing</keyword>
<keyword id="KW-0963">Cytoplasm</keyword>
<keyword id="KW-0206">Cytoskeleton</keyword>
<keyword id="KW-0539">Nucleus</keyword>
<keyword id="KW-0597">Phosphoprotein</keyword>
<keyword id="KW-1267">Proteomics identification</keyword>
<keyword id="KW-1185">Reference proteome</keyword>
<sequence>MTDTRRRVKVYTLNEDRQWDDRGTGHVSSGYVERLKGMSLLVRAESDGSLLLESKINPNTAYQKQQDTLIVWSEAENYDLALSFQEKAGCDEIWEKICQVQGKDPSVDITQDLVDESEEERFDDMSSPGLELPSCELSRLEEIAELVASSLPSPLRREKLALALENEGYIKKLLELFHVCEDLENIEGLHHLYEIIKGIFLLNRTALFEVMFSEECIMDVIGCLEYDPALSQPRKHREFLTKTAKFKEVIPISDPELKQKIHQTYRVQYIQDMVLPTPSVFEENMLSTLHSFIFFNKVEIVGMLQEDEKFLTDLFAQLTDEATDEEKRQELVNFLKEFCAFSQTLQPQNRDAFFKTLSNMGILPALEVILGMDDTQVRSAATDIFSYLVEYNPSMVREFVMQEAQQNDDVSKKLTEQKITSKDILLINLIIEHMICDTDPELGGAVQLMGLLRTLVDPENMLATANKTEKTEFLGFFYKHCMHVLTAPLLANTTEDKPSKDDFQTAQLLALVLELLTFCVEHHTYHIKNYIINKDILRRVLVLMASKHAFLALCALRFKRKIIGLKDEFYNRYIMKSFLFEPVVKAFLNNGSRYNLMNSAIIEMFEFIRVEDIKSLTAHVIENYWKALEDVDYVQTFKGLKLRFEQQRERQDNPKLDSMRSILRNHRYRRDARTLEDEEEMWFNTDEDDMEDGEAVVSPSDKTKNDDDIMDPISKFMERKKLKESEEKEVLLKTNLSGRQSPSFKLSLSSGTKTNLTSQSSTTNLPGSPGSPGSPGSPGSPGSVPKNTSQTAAITTKGGLVGLVDYPDDDEDDDEDEDKEDTLPLSKKAKFDS</sequence>
<comment type="function">
    <text evidence="5">Regulatory subunit of serine/threonine-protein phosphatase 4. May regulate the activity of PPP4C at centrosomal microtubule organizing centers. The PPP4C-PPP4R2-PPP4R3A PP4 complex specifically dephosphorylates H2AX phosphorylated on 'Ser-140' (gamma-H2AX) generated during DNA replication and required for DNA DSB repair.</text>
</comment>
<comment type="subunit">
    <text evidence="3 5">Serine/threonine-protein phosphatase 4 (PP4) occurs in different assemblies of the catalytic and one or more regulatory subunits. Component of the PP4 complex PPP4C-PPP4R2-PPP4R3A. Interacts with PPP4C; the interaction requires PPP4R2.</text>
</comment>
<comment type="subcellular location">
    <subcellularLocation>
        <location evidence="4">Cytoplasm</location>
    </subcellularLocation>
    <subcellularLocation>
        <location evidence="4">Cytoplasm</location>
        <location evidence="4">Cytoskeleton</location>
        <location evidence="4">Microtubule organizing center</location>
        <location evidence="4">Centrosome</location>
    </subcellularLocation>
    <subcellularLocation>
        <location evidence="4">Nucleus</location>
    </subcellularLocation>
    <text>In interphase localized in the cytoplasm and in the nucleus (with higher levels). During metaphase located in pericentriolar regions.</text>
</comment>
<comment type="alternative products">
    <event type="alternative splicing"/>
    <isoform>
        <id>Q6IN85-1</id>
        <name>1</name>
        <sequence type="displayed"/>
    </isoform>
    <isoform>
        <id>Q6IN85-2</id>
        <name>2</name>
        <sequence type="described" ref="VSP_021253"/>
    </isoform>
    <isoform>
        <id>Q6IN85-4</id>
        <name>4</name>
        <sequence type="described" ref="VSP_021252"/>
    </isoform>
    <isoform>
        <id>Q6IN85-5</id>
        <name>5</name>
        <sequence type="described" ref="VSP_021253 VSP_021256"/>
    </isoform>
</comment>
<comment type="similarity">
    <text evidence="9">Belongs to the SMEK family.</text>
</comment>
<comment type="sequence caution" evidence="9">
    <conflict type="erroneous translation">
        <sequence resource="EMBL-CDS" id="AAG39284"/>
    </conflict>
    <text>Wrong choice of frame.</text>
</comment>
<comment type="sequence caution" evidence="9">
    <conflict type="erroneous initiation">
        <sequence resource="EMBL-CDS" id="BAA91960"/>
    </conflict>
    <text>Truncated N-terminus.</text>
</comment>
<comment type="sequence caution" evidence="9">
    <conflict type="miscellaneous discrepancy">
        <sequence resource="EMBL-CDS" id="BAA91960"/>
    </conflict>
    <text>Probable intron retention.</text>
</comment>
<comment type="sequence caution" evidence="9">
    <conflict type="erroneous initiation">
        <sequence resource="EMBL-CDS" id="BAB14877"/>
    </conflict>
    <text>Truncated N-terminus.</text>
</comment>
<comment type="sequence caution" evidence="9">
    <conflict type="erroneous initiation">
        <sequence resource="EMBL-CDS" id="BAC23106"/>
    </conflict>
    <text>Extended N-terminus.</text>
</comment>
<name>P4R3A_HUMAN</name>
<proteinExistence type="evidence at protein level"/>
<accession>Q6IN85</accession>
<accession>Q69YK6</accession>
<accession>Q86U23</accession>
<accession>Q86YI7</accession>
<accession>Q8IVG1</accession>
<accession>Q9H3F1</accession>
<accession>Q9H7U8</accession>
<accession>Q9NV01</accession>
<accession>Q9NWP1</accession>
<gene>
    <name evidence="10" type="primary">PPP4R3A</name>
    <name type="synonym">KIAA2010</name>
    <name type="synonym">PP4R3A</name>
    <name type="synonym">SMEK1</name>
    <name type="ORF">MSTP033</name>
</gene>